<feature type="chain" id="PRO_0000142131" description="Imidazole glycerol phosphate synthase subunit HisF">
    <location>
        <begin position="1"/>
        <end position="261"/>
    </location>
</feature>
<feature type="active site" evidence="1">
    <location>
        <position position="12"/>
    </location>
</feature>
<feature type="active site" evidence="1">
    <location>
        <position position="131"/>
    </location>
</feature>
<organism>
    <name type="scientific">Brucella suis biovar 1 (strain 1330)</name>
    <dbReference type="NCBI Taxonomy" id="204722"/>
    <lineage>
        <taxon>Bacteria</taxon>
        <taxon>Pseudomonadati</taxon>
        <taxon>Pseudomonadota</taxon>
        <taxon>Alphaproteobacteria</taxon>
        <taxon>Hyphomicrobiales</taxon>
        <taxon>Brucellaceae</taxon>
        <taxon>Brucella/Ochrobactrum group</taxon>
        <taxon>Brucella</taxon>
    </lineage>
</organism>
<comment type="function">
    <text evidence="1">IGPS catalyzes the conversion of PRFAR and glutamine to IGP, AICAR and glutamate. The HisF subunit catalyzes the cyclization activity that produces IGP and AICAR from PRFAR using the ammonia provided by the HisH subunit.</text>
</comment>
<comment type="catalytic activity">
    <reaction evidence="1">
        <text>5-[(5-phospho-1-deoxy-D-ribulos-1-ylimino)methylamino]-1-(5-phospho-beta-D-ribosyl)imidazole-4-carboxamide + L-glutamine = D-erythro-1-(imidazol-4-yl)glycerol 3-phosphate + 5-amino-1-(5-phospho-beta-D-ribosyl)imidazole-4-carboxamide + L-glutamate + H(+)</text>
        <dbReference type="Rhea" id="RHEA:24793"/>
        <dbReference type="ChEBI" id="CHEBI:15378"/>
        <dbReference type="ChEBI" id="CHEBI:29985"/>
        <dbReference type="ChEBI" id="CHEBI:58278"/>
        <dbReference type="ChEBI" id="CHEBI:58359"/>
        <dbReference type="ChEBI" id="CHEBI:58475"/>
        <dbReference type="ChEBI" id="CHEBI:58525"/>
        <dbReference type="EC" id="4.3.2.10"/>
    </reaction>
</comment>
<comment type="pathway">
    <text evidence="1">Amino-acid biosynthesis; L-histidine biosynthesis; L-histidine from 5-phospho-alpha-D-ribose 1-diphosphate: step 5/9.</text>
</comment>
<comment type="subunit">
    <text evidence="1">Heterodimer of HisH and HisF.</text>
</comment>
<comment type="subcellular location">
    <subcellularLocation>
        <location evidence="1">Cytoplasm</location>
    </subcellularLocation>
</comment>
<comment type="similarity">
    <text evidence="1">Belongs to the HisA/HisF family.</text>
</comment>
<name>HIS6_BRUSU</name>
<evidence type="ECO:0000255" key="1">
    <source>
        <dbReference type="HAMAP-Rule" id="MF_01013"/>
    </source>
</evidence>
<gene>
    <name evidence="1" type="primary">hisF</name>
    <name type="ordered locus">BR2085</name>
    <name type="ordered locus">BS1330_I2079</name>
</gene>
<sequence>MTLKARVIPCLDVKDGRVVKGVNFVDLIDAGDPVEAARAYDAAGADELCFLDITASSDNRETIFDVVARTAEQCFMPLTVGGGVRQVADIRKLLLAGADKVSINTAAVKNPEFVAEAADKFGNQCIVVAIDAKKVSGAGENDRWEIFTHGGRQPTGIDAVEFAQKVVDLGAGEILLTSMDRDGTKAGYDVALTRAVADSVRAPVIASGGVGTLDHLVAGIRDGHATAVLAASIFHFGTYTIGEAKRYMAEAGIPMRLDPVR</sequence>
<keyword id="KW-0028">Amino-acid biosynthesis</keyword>
<keyword id="KW-0963">Cytoplasm</keyword>
<keyword id="KW-0368">Histidine biosynthesis</keyword>
<keyword id="KW-0456">Lyase</keyword>
<dbReference type="EC" id="4.3.2.10" evidence="1"/>
<dbReference type="EMBL" id="AE014291">
    <property type="protein sequence ID" value="AAN30975.1"/>
    <property type="molecule type" value="Genomic_DNA"/>
</dbReference>
<dbReference type="EMBL" id="CP002997">
    <property type="protein sequence ID" value="AEM19392.1"/>
    <property type="molecule type" value="Genomic_DNA"/>
</dbReference>
<dbReference type="RefSeq" id="WP_002965151.1">
    <property type="nucleotide sequence ID" value="NZ_KN046804.1"/>
</dbReference>
<dbReference type="SMR" id="Q8FY07"/>
<dbReference type="GeneID" id="97534652"/>
<dbReference type="KEGG" id="bms:BR2085"/>
<dbReference type="KEGG" id="bsi:BS1330_I2079"/>
<dbReference type="HOGENOM" id="CLU_048577_4_0_5"/>
<dbReference type="UniPathway" id="UPA00031">
    <property type="reaction ID" value="UER00010"/>
</dbReference>
<dbReference type="PRO" id="PR:Q8FY07"/>
<dbReference type="Proteomes" id="UP000007104">
    <property type="component" value="Chromosome I"/>
</dbReference>
<dbReference type="GO" id="GO:0005737">
    <property type="term" value="C:cytoplasm"/>
    <property type="evidence" value="ECO:0007669"/>
    <property type="project" value="UniProtKB-SubCell"/>
</dbReference>
<dbReference type="GO" id="GO:0000107">
    <property type="term" value="F:imidazoleglycerol-phosphate synthase activity"/>
    <property type="evidence" value="ECO:0007669"/>
    <property type="project" value="UniProtKB-UniRule"/>
</dbReference>
<dbReference type="GO" id="GO:0016829">
    <property type="term" value="F:lyase activity"/>
    <property type="evidence" value="ECO:0007669"/>
    <property type="project" value="UniProtKB-KW"/>
</dbReference>
<dbReference type="GO" id="GO:0000105">
    <property type="term" value="P:L-histidine biosynthetic process"/>
    <property type="evidence" value="ECO:0007669"/>
    <property type="project" value="UniProtKB-UniRule"/>
</dbReference>
<dbReference type="CDD" id="cd04731">
    <property type="entry name" value="HisF"/>
    <property type="match status" value="1"/>
</dbReference>
<dbReference type="FunFam" id="3.20.20.70:FF:000006">
    <property type="entry name" value="Imidazole glycerol phosphate synthase subunit HisF"/>
    <property type="match status" value="1"/>
</dbReference>
<dbReference type="Gene3D" id="3.20.20.70">
    <property type="entry name" value="Aldolase class I"/>
    <property type="match status" value="1"/>
</dbReference>
<dbReference type="HAMAP" id="MF_01013">
    <property type="entry name" value="HisF"/>
    <property type="match status" value="1"/>
</dbReference>
<dbReference type="InterPro" id="IPR013785">
    <property type="entry name" value="Aldolase_TIM"/>
</dbReference>
<dbReference type="InterPro" id="IPR006062">
    <property type="entry name" value="His_biosynth"/>
</dbReference>
<dbReference type="InterPro" id="IPR004651">
    <property type="entry name" value="HisF"/>
</dbReference>
<dbReference type="InterPro" id="IPR050064">
    <property type="entry name" value="IGPS_HisA/HisF"/>
</dbReference>
<dbReference type="InterPro" id="IPR011060">
    <property type="entry name" value="RibuloseP-bd_barrel"/>
</dbReference>
<dbReference type="NCBIfam" id="TIGR00735">
    <property type="entry name" value="hisF"/>
    <property type="match status" value="1"/>
</dbReference>
<dbReference type="PANTHER" id="PTHR21235:SF2">
    <property type="entry name" value="IMIDAZOLE GLYCEROL PHOSPHATE SYNTHASE HISHF"/>
    <property type="match status" value="1"/>
</dbReference>
<dbReference type="PANTHER" id="PTHR21235">
    <property type="entry name" value="IMIDAZOLE GLYCEROL PHOSPHATE SYNTHASE SUBUNIT HISF/H IGP SYNTHASE SUBUNIT HISF/H"/>
    <property type="match status" value="1"/>
</dbReference>
<dbReference type="Pfam" id="PF00977">
    <property type="entry name" value="His_biosynth"/>
    <property type="match status" value="1"/>
</dbReference>
<dbReference type="SUPFAM" id="SSF51366">
    <property type="entry name" value="Ribulose-phoshate binding barrel"/>
    <property type="match status" value="1"/>
</dbReference>
<proteinExistence type="inferred from homology"/>
<reference key="1">
    <citation type="journal article" date="2002" name="Proc. Natl. Acad. Sci. U.S.A.">
        <title>The Brucella suis genome reveals fundamental similarities between animal and plant pathogens and symbionts.</title>
        <authorList>
            <person name="Paulsen I.T."/>
            <person name="Seshadri R."/>
            <person name="Nelson K.E."/>
            <person name="Eisen J.A."/>
            <person name="Heidelberg J.F."/>
            <person name="Read T.D."/>
            <person name="Dodson R.J."/>
            <person name="Umayam L.A."/>
            <person name="Brinkac L.M."/>
            <person name="Beanan M.J."/>
            <person name="Daugherty S.C."/>
            <person name="DeBoy R.T."/>
            <person name="Durkin A.S."/>
            <person name="Kolonay J.F."/>
            <person name="Madupu R."/>
            <person name="Nelson W.C."/>
            <person name="Ayodeji B."/>
            <person name="Kraul M."/>
            <person name="Shetty J."/>
            <person name="Malek J.A."/>
            <person name="Van Aken S.E."/>
            <person name="Riedmuller S."/>
            <person name="Tettelin H."/>
            <person name="Gill S.R."/>
            <person name="White O."/>
            <person name="Salzberg S.L."/>
            <person name="Hoover D.L."/>
            <person name="Lindler L.E."/>
            <person name="Halling S.M."/>
            <person name="Boyle S.M."/>
            <person name="Fraser C.M."/>
        </authorList>
    </citation>
    <scope>NUCLEOTIDE SEQUENCE [LARGE SCALE GENOMIC DNA]</scope>
    <source>
        <strain>1330</strain>
    </source>
</reference>
<reference key="2">
    <citation type="journal article" date="2011" name="J. Bacteriol.">
        <title>Revised genome sequence of Brucella suis 1330.</title>
        <authorList>
            <person name="Tae H."/>
            <person name="Shallom S."/>
            <person name="Settlage R."/>
            <person name="Preston D."/>
            <person name="Adams L.G."/>
            <person name="Garner H.R."/>
        </authorList>
    </citation>
    <scope>NUCLEOTIDE SEQUENCE [LARGE SCALE GENOMIC DNA]</scope>
    <source>
        <strain>1330</strain>
    </source>
</reference>
<accession>Q8FY07</accession>
<accession>G0K933</accession>
<protein>
    <recommendedName>
        <fullName evidence="1">Imidazole glycerol phosphate synthase subunit HisF</fullName>
        <ecNumber evidence="1">4.3.2.10</ecNumber>
    </recommendedName>
    <alternativeName>
        <fullName evidence="1">IGP synthase cyclase subunit</fullName>
    </alternativeName>
    <alternativeName>
        <fullName evidence="1">IGP synthase subunit HisF</fullName>
    </alternativeName>
    <alternativeName>
        <fullName evidence="1">ImGP synthase subunit HisF</fullName>
        <shortName evidence="1">IGPS subunit HisF</shortName>
    </alternativeName>
</protein>